<accession>A6ZZS7</accession>
<comment type="function">
    <text evidence="1">Glucose-responsive transcription factor that regulates expression of several glucose transporter (HXT) genes in response to glucose. In the absence of glucose, it functions as a transcriptional repressor, whereas high concentrations of glucose cause it to function as a transcriptional activator. In cells growing on low levels of glucose, has a neutral role, neither repressing nor activating transcription. Binds the consensus binding site sequence 5'-CGGANNA-3', of which multiple copies are present in all HXT promoters regulated by RGT1 (By similarity).</text>
</comment>
<comment type="subcellular location">
    <subcellularLocation>
        <location evidence="3">Nucleus</location>
    </subcellularLocation>
    <subcellularLocation>
        <location evidence="1">Cytoplasm</location>
    </subcellularLocation>
</comment>
<comment type="PTM">
    <text evidence="1">Glucose-induced phosphorylation regulates the DNA-binding activity. Hyperphosphorylation in cells growing on high levels of glucose does prevents DNA-binding and dephosphorylation restores DNA-binding ability (By similarity).</text>
</comment>
<comment type="similarity">
    <text evidence="5">Belongs to the EDS1/RGT1 family.</text>
</comment>
<organism>
    <name type="scientific">Saccharomyces cerevisiae (strain YJM789)</name>
    <name type="common">Baker's yeast</name>
    <dbReference type="NCBI Taxonomy" id="307796"/>
    <lineage>
        <taxon>Eukaryota</taxon>
        <taxon>Fungi</taxon>
        <taxon>Dikarya</taxon>
        <taxon>Ascomycota</taxon>
        <taxon>Saccharomycotina</taxon>
        <taxon>Saccharomycetes</taxon>
        <taxon>Saccharomycetales</taxon>
        <taxon>Saccharomycetaceae</taxon>
        <taxon>Saccharomyces</taxon>
    </lineage>
</organism>
<dbReference type="EMBL" id="AAFW02000152">
    <property type="protein sequence ID" value="EDN59870.1"/>
    <property type="molecule type" value="Genomic_DNA"/>
</dbReference>
<dbReference type="HOGENOM" id="CLU_006525_0_0_1"/>
<dbReference type="OrthoDB" id="39552at4893"/>
<dbReference type="Proteomes" id="UP000007060">
    <property type="component" value="Unassembled WGS sequence"/>
</dbReference>
<dbReference type="GO" id="GO:0005737">
    <property type="term" value="C:cytoplasm"/>
    <property type="evidence" value="ECO:0007669"/>
    <property type="project" value="UniProtKB-SubCell"/>
</dbReference>
<dbReference type="GO" id="GO:0005634">
    <property type="term" value="C:nucleus"/>
    <property type="evidence" value="ECO:0007669"/>
    <property type="project" value="UniProtKB-SubCell"/>
</dbReference>
<dbReference type="GO" id="GO:0003677">
    <property type="term" value="F:DNA binding"/>
    <property type="evidence" value="ECO:0007669"/>
    <property type="project" value="UniProtKB-KW"/>
</dbReference>
<dbReference type="GO" id="GO:0000981">
    <property type="term" value="F:DNA-binding transcription factor activity, RNA polymerase II-specific"/>
    <property type="evidence" value="ECO:0007669"/>
    <property type="project" value="InterPro"/>
</dbReference>
<dbReference type="GO" id="GO:0008270">
    <property type="term" value="F:zinc ion binding"/>
    <property type="evidence" value="ECO:0007669"/>
    <property type="project" value="InterPro"/>
</dbReference>
<dbReference type="CDD" id="cd00067">
    <property type="entry name" value="GAL4"/>
    <property type="match status" value="1"/>
</dbReference>
<dbReference type="Gene3D" id="4.10.240.10">
    <property type="entry name" value="Zn(2)-C6 fungal-type DNA-binding domain"/>
    <property type="match status" value="1"/>
</dbReference>
<dbReference type="InterPro" id="IPR050797">
    <property type="entry name" value="Carb_Metab_Trans_Reg"/>
</dbReference>
<dbReference type="InterPro" id="IPR036864">
    <property type="entry name" value="Zn2-C6_fun-type_DNA-bd_sf"/>
</dbReference>
<dbReference type="InterPro" id="IPR001138">
    <property type="entry name" value="Zn2Cys6_DnaBD"/>
</dbReference>
<dbReference type="PANTHER" id="PTHR31668:SF26">
    <property type="entry name" value="GLUCOSE TRANSPORT TRANSCRIPTION REGULATOR RGT1-RELATED"/>
    <property type="match status" value="1"/>
</dbReference>
<dbReference type="PANTHER" id="PTHR31668">
    <property type="entry name" value="GLUCOSE TRANSPORT TRANSCRIPTION REGULATOR RGT1-RELATED-RELATED"/>
    <property type="match status" value="1"/>
</dbReference>
<dbReference type="Pfam" id="PF00172">
    <property type="entry name" value="Zn_clus"/>
    <property type="match status" value="1"/>
</dbReference>
<dbReference type="SMART" id="SM00066">
    <property type="entry name" value="GAL4"/>
    <property type="match status" value="1"/>
</dbReference>
<dbReference type="SUPFAM" id="SSF57701">
    <property type="entry name" value="Zn2/Cys6 DNA-binding domain"/>
    <property type="match status" value="1"/>
</dbReference>
<dbReference type="PROSITE" id="PS00463">
    <property type="entry name" value="ZN2_CY6_FUNGAL_1"/>
    <property type="match status" value="1"/>
</dbReference>
<dbReference type="PROSITE" id="PS50048">
    <property type="entry name" value="ZN2_CY6_FUNGAL_2"/>
    <property type="match status" value="1"/>
</dbReference>
<name>RGT1_YEAS7</name>
<feature type="chain" id="PRO_0000408019" description="Glucose transport transcription regulator RGT1">
    <location>
        <begin position="1"/>
        <end position="1170"/>
    </location>
</feature>
<feature type="DNA-binding region" description="Zn(2)-C6 fungal-type" evidence="3">
    <location>
        <begin position="47"/>
        <end position="76"/>
    </location>
</feature>
<feature type="region of interest" description="Disordered" evidence="4">
    <location>
        <begin position="1"/>
        <end position="46"/>
    </location>
</feature>
<feature type="region of interest" description="Disordered" evidence="4">
    <location>
        <begin position="77"/>
        <end position="148"/>
    </location>
</feature>
<feature type="region of interest" description="Disordered" evidence="4">
    <location>
        <begin position="217"/>
        <end position="254"/>
    </location>
</feature>
<feature type="region of interest" description="Disordered" evidence="4">
    <location>
        <begin position="269"/>
        <end position="288"/>
    </location>
</feature>
<feature type="region of interest" description="Disordered" evidence="4">
    <location>
        <begin position="293"/>
        <end position="343"/>
    </location>
</feature>
<feature type="region of interest" description="Disordered" evidence="4">
    <location>
        <begin position="384"/>
        <end position="506"/>
    </location>
</feature>
<feature type="region of interest" description="Disordered" evidence="4">
    <location>
        <begin position="725"/>
        <end position="757"/>
    </location>
</feature>
<feature type="region of interest" description="Disordered" evidence="4">
    <location>
        <begin position="946"/>
        <end position="974"/>
    </location>
</feature>
<feature type="compositionally biased region" description="Polar residues" evidence="4">
    <location>
        <begin position="1"/>
        <end position="22"/>
    </location>
</feature>
<feature type="compositionally biased region" description="Basic and acidic residues" evidence="4">
    <location>
        <begin position="99"/>
        <end position="108"/>
    </location>
</feature>
<feature type="compositionally biased region" description="Low complexity" evidence="4">
    <location>
        <begin position="113"/>
        <end position="138"/>
    </location>
</feature>
<feature type="compositionally biased region" description="Polar residues" evidence="4">
    <location>
        <begin position="139"/>
        <end position="148"/>
    </location>
</feature>
<feature type="compositionally biased region" description="Polar residues" evidence="4">
    <location>
        <begin position="217"/>
        <end position="234"/>
    </location>
</feature>
<feature type="compositionally biased region" description="Low complexity" evidence="4">
    <location>
        <begin position="239"/>
        <end position="250"/>
    </location>
</feature>
<feature type="compositionally biased region" description="Basic and acidic residues" evidence="4">
    <location>
        <begin position="271"/>
        <end position="280"/>
    </location>
</feature>
<feature type="compositionally biased region" description="Low complexity" evidence="4">
    <location>
        <begin position="293"/>
        <end position="302"/>
    </location>
</feature>
<feature type="compositionally biased region" description="Low complexity" evidence="4">
    <location>
        <begin position="309"/>
        <end position="341"/>
    </location>
</feature>
<feature type="compositionally biased region" description="Low complexity" evidence="4">
    <location>
        <begin position="385"/>
        <end position="397"/>
    </location>
</feature>
<feature type="compositionally biased region" description="Polar residues" evidence="4">
    <location>
        <begin position="411"/>
        <end position="422"/>
    </location>
</feature>
<feature type="compositionally biased region" description="Low complexity" evidence="4">
    <location>
        <begin position="424"/>
        <end position="444"/>
    </location>
</feature>
<feature type="compositionally biased region" description="Polar residues" evidence="4">
    <location>
        <begin position="445"/>
        <end position="457"/>
    </location>
</feature>
<feature type="compositionally biased region" description="Basic residues" evidence="4">
    <location>
        <begin position="473"/>
        <end position="488"/>
    </location>
</feature>
<feature type="compositionally biased region" description="Polar residues" evidence="4">
    <location>
        <begin position="493"/>
        <end position="506"/>
    </location>
</feature>
<feature type="modified residue" description="Phosphoserine" evidence="2">
    <location>
        <position position="202"/>
    </location>
</feature>
<feature type="modified residue" description="Phosphoserine" evidence="2">
    <location>
        <position position="205"/>
    </location>
</feature>
<feature type="modified residue" description="Phosphoserine" evidence="2">
    <location>
        <position position="208"/>
    </location>
</feature>
<feature type="modified residue" description="Phosphoserine" evidence="2">
    <location>
        <position position="229"/>
    </location>
</feature>
<feature type="modified residue" description="Phosphoserine" evidence="2">
    <location>
        <position position="283"/>
    </location>
</feature>
<feature type="modified residue" description="Phosphoserine" evidence="2">
    <location>
        <position position="284"/>
    </location>
</feature>
<feature type="modified residue" description="Phosphoserine" evidence="2">
    <location>
        <position position="410"/>
    </location>
</feature>
<feature type="modified residue" description="Phosphoserine" evidence="2">
    <location>
        <position position="414"/>
    </location>
</feature>
<feature type="modified residue" description="Phosphoserine" evidence="2">
    <location>
        <position position="1130"/>
    </location>
</feature>
<reference key="1">
    <citation type="journal article" date="2007" name="Proc. Natl. Acad. Sci. U.S.A.">
        <title>Genome sequencing and comparative analysis of Saccharomyces cerevisiae strain YJM789.</title>
        <authorList>
            <person name="Wei W."/>
            <person name="McCusker J.H."/>
            <person name="Hyman R.W."/>
            <person name="Jones T."/>
            <person name="Ning Y."/>
            <person name="Cao Z."/>
            <person name="Gu Z."/>
            <person name="Bruno D."/>
            <person name="Miranda M."/>
            <person name="Nguyen M."/>
            <person name="Wilhelmy J."/>
            <person name="Komp C."/>
            <person name="Tamse R."/>
            <person name="Wang X."/>
            <person name="Jia P."/>
            <person name="Luedi P."/>
            <person name="Oefner P.J."/>
            <person name="David L."/>
            <person name="Dietrich F.S."/>
            <person name="Li Y."/>
            <person name="Davis R.W."/>
            <person name="Steinmetz L.M."/>
        </authorList>
    </citation>
    <scope>NUCLEOTIDE SEQUENCE [LARGE SCALE GENOMIC DNA]</scope>
    <source>
        <strain>YJM789</strain>
    </source>
</reference>
<gene>
    <name type="primary">RGT1</name>
    <name type="ORF">SCY_3337</name>
</gene>
<protein>
    <recommendedName>
        <fullName>Glucose transport transcription regulator RGT1</fullName>
    </recommendedName>
    <alternativeName>
        <fullName>Restores glucose transport protein 1</fullName>
    </alternativeName>
</protein>
<evidence type="ECO:0000250" key="1"/>
<evidence type="ECO:0000250" key="2">
    <source>
        <dbReference type="UniProtKB" id="P32862"/>
    </source>
</evidence>
<evidence type="ECO:0000255" key="3">
    <source>
        <dbReference type="PROSITE-ProRule" id="PRU00227"/>
    </source>
</evidence>
<evidence type="ECO:0000256" key="4">
    <source>
        <dbReference type="SAM" id="MobiDB-lite"/>
    </source>
</evidence>
<evidence type="ECO:0000305" key="5"/>
<keyword id="KW-0010">Activator</keyword>
<keyword id="KW-0963">Cytoplasm</keyword>
<keyword id="KW-0238">DNA-binding</keyword>
<keyword id="KW-0479">Metal-binding</keyword>
<keyword id="KW-0539">Nucleus</keyword>
<keyword id="KW-0597">Phosphoprotein</keyword>
<keyword id="KW-0678">Repressor</keyword>
<keyword id="KW-0804">Transcription</keyword>
<keyword id="KW-0805">Transcription regulation</keyword>
<keyword id="KW-0862">Zinc</keyword>
<sequence>MNELNTVSTNSSDSTKNGGTSNSPDDMDSAAAASHAIKKRTKASRACDQCRKKKIKCDYKDEKGVCSNCQRNGDRCSFDRVPLKRGPSKGYTRSTSHPRTNEIQDHNNSRSYNTFDNSNNTLNNNTGNSGDNGINSNTVPSTPSRSNSVLLPPLTQYIPQVGGIPPSFQNPAIQSTMPAGNIGQQQFWKVPYHEFQHQRKGSIDSLQSDISVRTLNPNEQLSYNTVQQSPITNKHTNDSGNANGSVTGSGSASGSGGYWSFIRTSGLLAPTDDHNGEQTRRSSSIPSLLRNTSNSLLLGGQPQLPPPQQQSQPQAHQQKLQQGQNPYSYSQFSQQQPYNPSISSFGQFAANGFHSRQGSVASEAMSPSAPAMFTSTSTNPVNVAQQTQRPQGQQVPQFSSELDGNKRRQSAPVSVTLSTDRLNGNENNNGEINNNNGSNNSGSSKDTSQHSQESVTTPAALEASSPGSTPQRSTKKRRKSYVSKKTKPKRDSSISITSKDSAHPMTTSSTIAYGQISDVDLIDTYYEFIHVGFPIIPLNKTTLTSDLLLVNTQPISNIHEVNSYVILWFRNSLELLVRVALKQKPGGKFFDNIVGVALSPSNDNNKAGFTTATARDDAEKTRRDSHNEVQDTLEVQSVFIAALNECFQKIVDIHPKFRENNDQISPKIKVIYLSTFILLNYILAFVGYDNSFVLGMSVTIFNEFKLYKLLLFPEPDVNDVKAPVDEEANTGNGNTKTSEFEIGSESAGHMNPSNSPNSMDENISHYSVLFKRLYVLLSVFDSLQSCAFGGPKLLNISIQGSTERFFSNDLGSKWCLEQSQLRLKSVLQSLKLGELMSELTRNRISMNGNRKPGFDITNSSSLLSEYVETQPLSVAQLFCKLLIGKHNFINCLLSLYDSEAGVYSDLTLDLSSKIADSLCSLISIILQVLTLILRLNPTNSIDFNYRPPNPPANNPTVQEGPSAMGSSPVAGNLNAAPPSEGNPDFYKKLLGLKQDTGTILSDLCRGIISPFAIAILHEVYNITELVKQMPTSLISIMMTATTTQNTQDTKKSQDLVMKLSNSMNEVVQITSVLTMIKPFKIFEHELNKPIMSLTGGLSSTTRNDVMWPKSGQGLRESSVMKTLLDERRTSGTQPTTAPVAAEESRLENVALENFVSIGWKLLDDSELGWY</sequence>
<proteinExistence type="inferred from homology"/>